<protein>
    <recommendedName>
        <fullName>Plasma membrane ATPase 2</fullName>
        <ecNumber evidence="5">7.1.2.1</ecNumber>
    </recommendedName>
    <alternativeName>
        <fullName>Proton pump 2</fullName>
    </alternativeName>
</protein>
<feature type="chain" id="PRO_0000046270" description="Plasma membrane ATPase 2">
    <location>
        <begin position="1"/>
        <end position="1010"/>
    </location>
</feature>
<feature type="topological domain" description="Cytoplasmic" evidence="2">
    <location>
        <begin position="1"/>
        <end position="201"/>
    </location>
</feature>
<feature type="transmembrane region" description="Helical; Name=1" evidence="2">
    <location>
        <begin position="202"/>
        <end position="222"/>
    </location>
</feature>
<feature type="topological domain" description="Extracellular" evidence="2">
    <location>
        <begin position="223"/>
        <end position="226"/>
    </location>
</feature>
<feature type="transmembrane region" description="Helical; Name=2" evidence="2">
    <location>
        <begin position="227"/>
        <end position="246"/>
    </location>
</feature>
<feature type="topological domain" description="Cytoplasmic" evidence="2">
    <location>
        <begin position="247"/>
        <end position="377"/>
    </location>
</feature>
<feature type="transmembrane region" description="Helical; Name=3" evidence="2">
    <location>
        <begin position="378"/>
        <end position="399"/>
    </location>
</feature>
<feature type="topological domain" description="Extracellular" evidence="2">
    <location>
        <begin position="400"/>
        <end position="410"/>
    </location>
</feature>
<feature type="transmembrane region" description="Helical; Name=4" evidence="2">
    <location>
        <begin position="411"/>
        <end position="433"/>
    </location>
</feature>
<feature type="topological domain" description="Cytoplasmic" evidence="2">
    <location>
        <begin position="434"/>
        <end position="805"/>
    </location>
</feature>
<feature type="transmembrane region" description="Helical; Name=5" evidence="2">
    <location>
        <begin position="806"/>
        <end position="824"/>
    </location>
</feature>
<feature type="topological domain" description="Extracellular" evidence="2">
    <location>
        <begin position="825"/>
        <end position="840"/>
    </location>
</feature>
<feature type="transmembrane region" description="Helical; Name=6" evidence="2">
    <location>
        <begin position="841"/>
        <end position="860"/>
    </location>
</feature>
<feature type="topological domain" description="Cytoplasmic" evidence="2">
    <location>
        <begin position="861"/>
        <end position="912"/>
    </location>
</feature>
<feature type="transmembrane region" description="Helical; Name=7" evidence="2">
    <location>
        <begin position="913"/>
        <end position="933"/>
    </location>
</feature>
<feature type="topological domain" description="Extracellular" evidence="2">
    <location>
        <begin position="934"/>
        <end position="946"/>
    </location>
</feature>
<feature type="transmembrane region" description="Helical; Name=8" evidence="2">
    <location>
        <begin position="947"/>
        <end position="963"/>
    </location>
</feature>
<feature type="topological domain" description="Cytoplasmic" evidence="2">
    <location>
        <begin position="964"/>
        <end position="1010"/>
    </location>
</feature>
<feature type="region of interest" description="Disordered" evidence="3">
    <location>
        <begin position="1"/>
        <end position="126"/>
    </location>
</feature>
<feature type="region of interest" description="Disordered" evidence="3">
    <location>
        <begin position="139"/>
        <end position="165"/>
    </location>
</feature>
<feature type="compositionally biased region" description="Basic and acidic residues" evidence="3">
    <location>
        <begin position="1"/>
        <end position="14"/>
    </location>
</feature>
<feature type="compositionally biased region" description="Polar residues" evidence="3">
    <location>
        <begin position="25"/>
        <end position="34"/>
    </location>
</feature>
<feature type="compositionally biased region" description="Acidic residues" evidence="3">
    <location>
        <begin position="42"/>
        <end position="52"/>
    </location>
</feature>
<feature type="compositionally biased region" description="Polar residues" evidence="3">
    <location>
        <begin position="68"/>
        <end position="106"/>
    </location>
</feature>
<feature type="compositionally biased region" description="Acidic residues" evidence="3">
    <location>
        <begin position="140"/>
        <end position="151"/>
    </location>
</feature>
<feature type="active site" description="4-aspartylphosphate intermediate" evidence="1">
    <location>
        <position position="464"/>
    </location>
</feature>
<feature type="binding site" evidence="1">
    <location>
        <position position="720"/>
    </location>
    <ligand>
        <name>Mg(2+)</name>
        <dbReference type="ChEBI" id="CHEBI:18420"/>
    </ligand>
</feature>
<feature type="binding site" evidence="1">
    <location>
        <position position="724"/>
    </location>
    <ligand>
        <name>Mg(2+)</name>
        <dbReference type="ChEBI" id="CHEBI:18420"/>
    </ligand>
</feature>
<keyword id="KW-0067">ATP-binding</keyword>
<keyword id="KW-1003">Cell membrane</keyword>
<keyword id="KW-0375">Hydrogen ion transport</keyword>
<keyword id="KW-0406">Ion transport</keyword>
<keyword id="KW-0460">Magnesium</keyword>
<keyword id="KW-0472">Membrane</keyword>
<keyword id="KW-0479">Metal-binding</keyword>
<keyword id="KW-0547">Nucleotide-binding</keyword>
<keyword id="KW-0597">Phosphoprotein</keyword>
<keyword id="KW-1185">Reference proteome</keyword>
<keyword id="KW-1278">Translocase</keyword>
<keyword id="KW-0812">Transmembrane</keyword>
<keyword id="KW-1133">Transmembrane helix</keyword>
<keyword id="KW-0813">Transport</keyword>
<sequence>MQRNNGEGRPEGMHRISRFLHGNPFKNNASPQDDSTTRTEVYEEGGVEDSAVDYDNASGNAAPRLTAAPNTHAQQANLQSGNTSITHETQSTSRGQEATTSPSLSASHEKPARPQTGEGSDNEDEDEDIDALIEDLYSQDQEEEQVEEEESPGPAGAAKVVPEELLETDPKYGLTESEVEERKKKYGLNQMKEEKTNNIKKFLSFFVGPIQFVMELAAALAAGLRDWVDFGVICALLLLNATVGFVQEYQAGSIVDELKKTMALKASVLRDGRVKEIEASEIVPGDILHLDEGTICPADGRLITKDCFLQVDQSAITGESLAVDKHQNDTMYSSSTVKRGEAFMVVTATADSTFVGRAASLVGAAGQSQGHFTEVLNGIGTILLVLVILTLLCIYTAAFYRSVRLAALLEYTLAITIIGVPVGLPAVVTTTMAVGAAYLAKKKAIVQKLSAIESLAGVEILCSDKTGTLTKNRLSLGEPYCVEGVSPDDLMLTACLASSRKKKGLDAIDKAFLKALRNYPKAKDQLSKYKVLDFHPFDPVSKKITAYVEAPDGQRITCVKGAPLWVFKTVQDDHEVPEAITDAYREQVNDMASRGFRSLGVARKADGKQWEILGIMPCSDPPRHDTARTIHEAIGLGLRIKMLTGDAVGIAKETARQLGMGTNVYNAERLGLSGGGDMPGSEVNDFVEAADGFAEVFPQHKYAVVDILQQRGYLVAMTGDGVNDAPSLKKADAGIAVEGASDAARSAADIVFLAPGLSAIIDALKTSRQIFHRMYAYVVYRIALSLHLEIFLGLWLIIRNQLLNLELIVFIAIFADVATLAIAYDNAPYAMKPVKWNLPRLWGLATIVGILLAIGTWIVNTTMIAQGQNRGIVQNFGVQDEVLFLQISLTENWLIFITRCSGPFWSSFPSWQLSGAVLVVDILATLFCIFGWFKGGHQTSIVAVIRIWMYSFGIFCLIAGVYYILSESSSFDRWMHGKHKERGTTRKLEDFVMQLQRTSTHHEAEGKVTS</sequence>
<evidence type="ECO:0000250" key="1"/>
<evidence type="ECO:0000255" key="2"/>
<evidence type="ECO:0000256" key="3">
    <source>
        <dbReference type="SAM" id="MobiDB-lite"/>
    </source>
</evidence>
<evidence type="ECO:0000305" key="4"/>
<evidence type="ECO:0000305" key="5">
    <source>
    </source>
</evidence>
<comment type="function">
    <text evidence="5">The plasma membrane ATPase of plants and fungi is a hydrogen ion pump. The proton gradient it generates drives the active transport of nutrients by H(+)-symport. The resulting external acidification and/or internal alkinization may mediate growth responses.</text>
</comment>
<comment type="catalytic activity">
    <reaction evidence="5">
        <text>ATP + H2O + H(+)(in) = ADP + phosphate + 2 H(+)(out)</text>
        <dbReference type="Rhea" id="RHEA:20852"/>
        <dbReference type="ChEBI" id="CHEBI:15377"/>
        <dbReference type="ChEBI" id="CHEBI:15378"/>
        <dbReference type="ChEBI" id="CHEBI:30616"/>
        <dbReference type="ChEBI" id="CHEBI:43474"/>
        <dbReference type="ChEBI" id="CHEBI:456216"/>
        <dbReference type="EC" id="7.1.2.1"/>
    </reaction>
    <physiologicalReaction direction="left-to-right" evidence="5">
        <dbReference type="Rhea" id="RHEA:20853"/>
    </physiologicalReaction>
</comment>
<comment type="subcellular location">
    <subcellularLocation>
        <location evidence="2">Cell membrane</location>
        <topology evidence="2">Multi-pass membrane protein</topology>
    </subcellularLocation>
</comment>
<comment type="PTM">
    <text>In addition to transient phosphorylation of the active site Asp residue, this protein, but not the product of the pma1 locus, is phosphorylated efficiently in isolated plasma membrane.</text>
</comment>
<comment type="similarity">
    <text evidence="4">Belongs to the cation transport ATPase (P-type) (TC 3.A.3) family. Type IIIA subfamily.</text>
</comment>
<accession>P28876</accession>
<name>PMA2_SCHPO</name>
<proteinExistence type="evidence at protein level"/>
<reference key="1">
    <citation type="journal article" date="1991" name="J. Biol. Chem.">
        <title>The pma1 and pma2 H(+)-ATPases from Schizosaccharomyces pombe are functionally interchangeable.</title>
        <authorList>
            <person name="Ghislain M."/>
            <person name="Goffeau A."/>
        </authorList>
    </citation>
    <scope>NUCLEOTIDE SEQUENCE [GENOMIC DNA]</scope>
    <scope>FUNCTION</scope>
    <scope>CATALYTIC ACTIVITY</scope>
</reference>
<reference key="2">
    <citation type="journal article" date="2002" name="Nature">
        <title>The genome sequence of Schizosaccharomyces pombe.</title>
        <authorList>
            <person name="Wood V."/>
            <person name="Gwilliam R."/>
            <person name="Rajandream M.A."/>
            <person name="Lyne M.H."/>
            <person name="Lyne R."/>
            <person name="Stewart A."/>
            <person name="Sgouros J.G."/>
            <person name="Peat N."/>
            <person name="Hayles J."/>
            <person name="Baker S.G."/>
            <person name="Basham D."/>
            <person name="Bowman S."/>
            <person name="Brooks K."/>
            <person name="Brown D."/>
            <person name="Brown S."/>
            <person name="Chillingworth T."/>
            <person name="Churcher C.M."/>
            <person name="Collins M."/>
            <person name="Connor R."/>
            <person name="Cronin A."/>
            <person name="Davis P."/>
            <person name="Feltwell T."/>
            <person name="Fraser A."/>
            <person name="Gentles S."/>
            <person name="Goble A."/>
            <person name="Hamlin N."/>
            <person name="Harris D.E."/>
            <person name="Hidalgo J."/>
            <person name="Hodgson G."/>
            <person name="Holroyd S."/>
            <person name="Hornsby T."/>
            <person name="Howarth S."/>
            <person name="Huckle E.J."/>
            <person name="Hunt S."/>
            <person name="Jagels K."/>
            <person name="James K.D."/>
            <person name="Jones L."/>
            <person name="Jones M."/>
            <person name="Leather S."/>
            <person name="McDonald S."/>
            <person name="McLean J."/>
            <person name="Mooney P."/>
            <person name="Moule S."/>
            <person name="Mungall K.L."/>
            <person name="Murphy L.D."/>
            <person name="Niblett D."/>
            <person name="Odell C."/>
            <person name="Oliver K."/>
            <person name="O'Neil S."/>
            <person name="Pearson D."/>
            <person name="Quail M.A."/>
            <person name="Rabbinowitsch E."/>
            <person name="Rutherford K.M."/>
            <person name="Rutter S."/>
            <person name="Saunders D."/>
            <person name="Seeger K."/>
            <person name="Sharp S."/>
            <person name="Skelton J."/>
            <person name="Simmonds M.N."/>
            <person name="Squares R."/>
            <person name="Squares S."/>
            <person name="Stevens K."/>
            <person name="Taylor K."/>
            <person name="Taylor R.G."/>
            <person name="Tivey A."/>
            <person name="Walsh S.V."/>
            <person name="Warren T."/>
            <person name="Whitehead S."/>
            <person name="Woodward J.R."/>
            <person name="Volckaert G."/>
            <person name="Aert R."/>
            <person name="Robben J."/>
            <person name="Grymonprez B."/>
            <person name="Weltjens I."/>
            <person name="Vanstreels E."/>
            <person name="Rieger M."/>
            <person name="Schaefer M."/>
            <person name="Mueller-Auer S."/>
            <person name="Gabel C."/>
            <person name="Fuchs M."/>
            <person name="Duesterhoeft A."/>
            <person name="Fritzc C."/>
            <person name="Holzer E."/>
            <person name="Moestl D."/>
            <person name="Hilbert H."/>
            <person name="Borzym K."/>
            <person name="Langer I."/>
            <person name="Beck A."/>
            <person name="Lehrach H."/>
            <person name="Reinhardt R."/>
            <person name="Pohl T.M."/>
            <person name="Eger P."/>
            <person name="Zimmermann W."/>
            <person name="Wedler H."/>
            <person name="Wambutt R."/>
            <person name="Purnelle B."/>
            <person name="Goffeau A."/>
            <person name="Cadieu E."/>
            <person name="Dreano S."/>
            <person name="Gloux S."/>
            <person name="Lelaure V."/>
            <person name="Mottier S."/>
            <person name="Galibert F."/>
            <person name="Aves S.J."/>
            <person name="Xiang Z."/>
            <person name="Hunt C."/>
            <person name="Moore K."/>
            <person name="Hurst S.M."/>
            <person name="Lucas M."/>
            <person name="Rochet M."/>
            <person name="Gaillardin C."/>
            <person name="Tallada V.A."/>
            <person name="Garzon A."/>
            <person name="Thode G."/>
            <person name="Daga R.R."/>
            <person name="Cruzado L."/>
            <person name="Jimenez J."/>
            <person name="Sanchez M."/>
            <person name="del Rey F."/>
            <person name="Benito J."/>
            <person name="Dominguez A."/>
            <person name="Revuelta J.L."/>
            <person name="Moreno S."/>
            <person name="Armstrong J."/>
            <person name="Forsburg S.L."/>
            <person name="Cerutti L."/>
            <person name="Lowe T."/>
            <person name="McCombie W.R."/>
            <person name="Paulsen I."/>
            <person name="Potashkin J."/>
            <person name="Shpakovski G.V."/>
            <person name="Ussery D."/>
            <person name="Barrell B.G."/>
            <person name="Nurse P."/>
        </authorList>
    </citation>
    <scope>NUCLEOTIDE SEQUENCE [LARGE SCALE GENOMIC DNA]</scope>
    <source>
        <strain>972 / ATCC 24843</strain>
    </source>
</reference>
<dbReference type="EC" id="7.1.2.1" evidence="5"/>
<dbReference type="EMBL" id="M60471">
    <property type="protein sequence ID" value="AAA35325.1"/>
    <property type="molecule type" value="Genomic_DNA"/>
</dbReference>
<dbReference type="EMBL" id="CU329672">
    <property type="protein sequence ID" value="CAA18989.2"/>
    <property type="molecule type" value="Genomic_DNA"/>
</dbReference>
<dbReference type="PIR" id="A40945">
    <property type="entry name" value="PXZP2P"/>
</dbReference>
<dbReference type="RefSeq" id="NP_587959.2">
    <property type="nucleotide sequence ID" value="NM_001022950.2"/>
</dbReference>
<dbReference type="SMR" id="P28876"/>
<dbReference type="BioGRID" id="275585">
    <property type="interactions" value="6"/>
</dbReference>
<dbReference type="FunCoup" id="P28876">
    <property type="interactions" value="187"/>
</dbReference>
<dbReference type="STRING" id="284812.P28876"/>
<dbReference type="iPTMnet" id="P28876"/>
<dbReference type="PaxDb" id="4896-SPCC1020.01c.1"/>
<dbReference type="EnsemblFungi" id="SPCC1020.01c.1">
    <property type="protein sequence ID" value="SPCC1020.01c.1:pep"/>
    <property type="gene ID" value="SPCC1020.01c"/>
</dbReference>
<dbReference type="GeneID" id="2539012"/>
<dbReference type="KEGG" id="spo:2539012"/>
<dbReference type="PomBase" id="SPCC1020.01c">
    <property type="gene designation" value="pma2"/>
</dbReference>
<dbReference type="VEuPathDB" id="FungiDB:SPCC1020.01c"/>
<dbReference type="eggNOG" id="KOG0205">
    <property type="taxonomic scope" value="Eukaryota"/>
</dbReference>
<dbReference type="HOGENOM" id="CLU_002360_6_0_1"/>
<dbReference type="InParanoid" id="P28876"/>
<dbReference type="OMA" id="APLWVFK"/>
<dbReference type="PhylomeDB" id="P28876"/>
<dbReference type="PRO" id="PR:P28876"/>
<dbReference type="Proteomes" id="UP000002485">
    <property type="component" value="Chromosome III"/>
</dbReference>
<dbReference type="GO" id="GO:0032153">
    <property type="term" value="C:cell division site"/>
    <property type="evidence" value="ECO:0007005"/>
    <property type="project" value="PomBase"/>
</dbReference>
<dbReference type="GO" id="GO:0051286">
    <property type="term" value="C:cell tip"/>
    <property type="evidence" value="ECO:0007005"/>
    <property type="project" value="PomBase"/>
</dbReference>
<dbReference type="GO" id="GO:0005886">
    <property type="term" value="C:plasma membrane"/>
    <property type="evidence" value="ECO:0000318"/>
    <property type="project" value="GO_Central"/>
</dbReference>
<dbReference type="GO" id="GO:0005524">
    <property type="term" value="F:ATP binding"/>
    <property type="evidence" value="ECO:0000255"/>
    <property type="project" value="PomBase"/>
</dbReference>
<dbReference type="GO" id="GO:0016887">
    <property type="term" value="F:ATP hydrolysis activity"/>
    <property type="evidence" value="ECO:0007669"/>
    <property type="project" value="InterPro"/>
</dbReference>
<dbReference type="GO" id="GO:0046872">
    <property type="term" value="F:metal ion binding"/>
    <property type="evidence" value="ECO:0007669"/>
    <property type="project" value="UniProtKB-KW"/>
</dbReference>
<dbReference type="GO" id="GO:0008553">
    <property type="term" value="F:P-type proton-exporting transporter activity"/>
    <property type="evidence" value="ECO:0000315"/>
    <property type="project" value="PomBase"/>
</dbReference>
<dbReference type="GO" id="GO:0120029">
    <property type="term" value="P:proton export across plasma membrane"/>
    <property type="evidence" value="ECO:0007669"/>
    <property type="project" value="InterPro"/>
</dbReference>
<dbReference type="GO" id="GO:1902600">
    <property type="term" value="P:proton transmembrane transport"/>
    <property type="evidence" value="ECO:0000318"/>
    <property type="project" value="GO_Central"/>
</dbReference>
<dbReference type="GO" id="GO:0051453">
    <property type="term" value="P:regulation of intracellular pH"/>
    <property type="evidence" value="ECO:0000318"/>
    <property type="project" value="GO_Central"/>
</dbReference>
<dbReference type="CDD" id="cd02076">
    <property type="entry name" value="P-type_ATPase_H"/>
    <property type="match status" value="1"/>
</dbReference>
<dbReference type="FunFam" id="2.70.150.10:FF:000011">
    <property type="entry name" value="Plasma membrane ATPase"/>
    <property type="match status" value="1"/>
</dbReference>
<dbReference type="FunFam" id="3.40.1110.10:FF:000005">
    <property type="entry name" value="Plasma membrane ATPase"/>
    <property type="match status" value="1"/>
</dbReference>
<dbReference type="FunFam" id="3.40.50.1000:FF:000008">
    <property type="entry name" value="Plasma membrane ATPase"/>
    <property type="match status" value="1"/>
</dbReference>
<dbReference type="Gene3D" id="3.40.1110.10">
    <property type="entry name" value="Calcium-transporting ATPase, cytoplasmic domain N"/>
    <property type="match status" value="1"/>
</dbReference>
<dbReference type="Gene3D" id="2.70.150.10">
    <property type="entry name" value="Calcium-transporting ATPase, cytoplasmic transduction domain A"/>
    <property type="match status" value="1"/>
</dbReference>
<dbReference type="Gene3D" id="1.20.1110.10">
    <property type="entry name" value="Calcium-transporting ATPase, transmembrane domain"/>
    <property type="match status" value="1"/>
</dbReference>
<dbReference type="Gene3D" id="3.40.50.1000">
    <property type="entry name" value="HAD superfamily/HAD-like"/>
    <property type="match status" value="1"/>
</dbReference>
<dbReference type="InterPro" id="IPR004014">
    <property type="entry name" value="ATPase_P-typ_cation-transptr_N"/>
</dbReference>
<dbReference type="InterPro" id="IPR023299">
    <property type="entry name" value="ATPase_P-typ_cyto_dom_N"/>
</dbReference>
<dbReference type="InterPro" id="IPR018303">
    <property type="entry name" value="ATPase_P-typ_P_site"/>
</dbReference>
<dbReference type="InterPro" id="IPR023298">
    <property type="entry name" value="ATPase_P-typ_TM_dom_sf"/>
</dbReference>
<dbReference type="InterPro" id="IPR008250">
    <property type="entry name" value="ATPase_P-typ_transduc_dom_A_sf"/>
</dbReference>
<dbReference type="InterPro" id="IPR036412">
    <property type="entry name" value="HAD-like_sf"/>
</dbReference>
<dbReference type="InterPro" id="IPR023214">
    <property type="entry name" value="HAD_sf"/>
</dbReference>
<dbReference type="InterPro" id="IPR006534">
    <property type="entry name" value="P-type_ATPase_IIIA"/>
</dbReference>
<dbReference type="InterPro" id="IPR001757">
    <property type="entry name" value="P_typ_ATPase"/>
</dbReference>
<dbReference type="InterPro" id="IPR044492">
    <property type="entry name" value="P_typ_ATPase_HD_dom"/>
</dbReference>
<dbReference type="NCBIfam" id="TIGR01647">
    <property type="entry name" value="ATPase-IIIA_H"/>
    <property type="match status" value="1"/>
</dbReference>
<dbReference type="NCBIfam" id="TIGR01494">
    <property type="entry name" value="ATPase_P-type"/>
    <property type="match status" value="2"/>
</dbReference>
<dbReference type="PANTHER" id="PTHR42861">
    <property type="entry name" value="CALCIUM-TRANSPORTING ATPASE"/>
    <property type="match status" value="1"/>
</dbReference>
<dbReference type="Pfam" id="PF00690">
    <property type="entry name" value="Cation_ATPase_N"/>
    <property type="match status" value="1"/>
</dbReference>
<dbReference type="Pfam" id="PF00122">
    <property type="entry name" value="E1-E2_ATPase"/>
    <property type="match status" value="1"/>
</dbReference>
<dbReference type="Pfam" id="PF00702">
    <property type="entry name" value="Hydrolase"/>
    <property type="match status" value="1"/>
</dbReference>
<dbReference type="PRINTS" id="PR00119">
    <property type="entry name" value="CATATPASE"/>
</dbReference>
<dbReference type="PRINTS" id="PR00120">
    <property type="entry name" value="HATPASE"/>
</dbReference>
<dbReference type="SFLD" id="SFLDS00003">
    <property type="entry name" value="Haloacid_Dehalogenase"/>
    <property type="match status" value="1"/>
</dbReference>
<dbReference type="SFLD" id="SFLDF00027">
    <property type="entry name" value="p-type_atpase"/>
    <property type="match status" value="1"/>
</dbReference>
<dbReference type="SMART" id="SM00831">
    <property type="entry name" value="Cation_ATPase_N"/>
    <property type="match status" value="1"/>
</dbReference>
<dbReference type="SUPFAM" id="SSF81653">
    <property type="entry name" value="Calcium ATPase, transduction domain A"/>
    <property type="match status" value="1"/>
</dbReference>
<dbReference type="SUPFAM" id="SSF81665">
    <property type="entry name" value="Calcium ATPase, transmembrane domain M"/>
    <property type="match status" value="1"/>
</dbReference>
<dbReference type="SUPFAM" id="SSF56784">
    <property type="entry name" value="HAD-like"/>
    <property type="match status" value="1"/>
</dbReference>
<dbReference type="PROSITE" id="PS00154">
    <property type="entry name" value="ATPASE_E1_E2"/>
    <property type="match status" value="1"/>
</dbReference>
<organism>
    <name type="scientific">Schizosaccharomyces pombe (strain 972 / ATCC 24843)</name>
    <name type="common">Fission yeast</name>
    <dbReference type="NCBI Taxonomy" id="284812"/>
    <lineage>
        <taxon>Eukaryota</taxon>
        <taxon>Fungi</taxon>
        <taxon>Dikarya</taxon>
        <taxon>Ascomycota</taxon>
        <taxon>Taphrinomycotina</taxon>
        <taxon>Schizosaccharomycetes</taxon>
        <taxon>Schizosaccharomycetales</taxon>
        <taxon>Schizosaccharomycetaceae</taxon>
        <taxon>Schizosaccharomyces</taxon>
    </lineage>
</organism>
<gene>
    <name type="primary">pma2</name>
    <name type="ORF">SPCC1020.01c</name>
    <name type="ORF">SPCC1393.01</name>
</gene>